<gene>
    <name evidence="1" type="primary">rplU</name>
    <name type="ordered locus">Wbm0701</name>
</gene>
<name>RL21_WOLTR</name>
<evidence type="ECO:0000255" key="1">
    <source>
        <dbReference type="HAMAP-Rule" id="MF_01363"/>
    </source>
</evidence>
<evidence type="ECO:0000305" key="2"/>
<organism>
    <name type="scientific">Wolbachia sp. subsp. Brugia malayi (strain TRS)</name>
    <dbReference type="NCBI Taxonomy" id="292805"/>
    <lineage>
        <taxon>Bacteria</taxon>
        <taxon>Pseudomonadati</taxon>
        <taxon>Pseudomonadota</taxon>
        <taxon>Alphaproteobacteria</taxon>
        <taxon>Rickettsiales</taxon>
        <taxon>Anaplasmataceae</taxon>
        <taxon>Wolbachieae</taxon>
        <taxon>Wolbachia</taxon>
    </lineage>
</organism>
<comment type="function">
    <text evidence="1">This protein binds to 23S rRNA in the presence of protein L20.</text>
</comment>
<comment type="subunit">
    <text evidence="1">Part of the 50S ribosomal subunit. Contacts protein L20.</text>
</comment>
<comment type="similarity">
    <text evidence="1">Belongs to the bacterial ribosomal protein bL21 family.</text>
</comment>
<accession>Q5GRT5</accession>
<keyword id="KW-1185">Reference proteome</keyword>
<keyword id="KW-0687">Ribonucleoprotein</keyword>
<keyword id="KW-0689">Ribosomal protein</keyword>
<keyword id="KW-0694">RNA-binding</keyword>
<keyword id="KW-0699">rRNA-binding</keyword>
<dbReference type="EMBL" id="AE017321">
    <property type="protein sequence ID" value="AAW71289.1"/>
    <property type="molecule type" value="Genomic_DNA"/>
</dbReference>
<dbReference type="RefSeq" id="WP_011256898.1">
    <property type="nucleotide sequence ID" value="NC_006833.1"/>
</dbReference>
<dbReference type="SMR" id="Q5GRT5"/>
<dbReference type="STRING" id="292805.Wbm0701"/>
<dbReference type="KEGG" id="wbm:Wbm0701"/>
<dbReference type="eggNOG" id="COG0261">
    <property type="taxonomic scope" value="Bacteria"/>
</dbReference>
<dbReference type="HOGENOM" id="CLU_061463_3_2_5"/>
<dbReference type="Proteomes" id="UP000000534">
    <property type="component" value="Chromosome"/>
</dbReference>
<dbReference type="GO" id="GO:0005737">
    <property type="term" value="C:cytoplasm"/>
    <property type="evidence" value="ECO:0007669"/>
    <property type="project" value="UniProtKB-ARBA"/>
</dbReference>
<dbReference type="GO" id="GO:1990904">
    <property type="term" value="C:ribonucleoprotein complex"/>
    <property type="evidence" value="ECO:0007669"/>
    <property type="project" value="UniProtKB-KW"/>
</dbReference>
<dbReference type="GO" id="GO:0005840">
    <property type="term" value="C:ribosome"/>
    <property type="evidence" value="ECO:0007669"/>
    <property type="project" value="UniProtKB-KW"/>
</dbReference>
<dbReference type="GO" id="GO:0019843">
    <property type="term" value="F:rRNA binding"/>
    <property type="evidence" value="ECO:0007669"/>
    <property type="project" value="UniProtKB-UniRule"/>
</dbReference>
<dbReference type="GO" id="GO:0003735">
    <property type="term" value="F:structural constituent of ribosome"/>
    <property type="evidence" value="ECO:0007669"/>
    <property type="project" value="InterPro"/>
</dbReference>
<dbReference type="GO" id="GO:0006412">
    <property type="term" value="P:translation"/>
    <property type="evidence" value="ECO:0007669"/>
    <property type="project" value="UniProtKB-UniRule"/>
</dbReference>
<dbReference type="HAMAP" id="MF_01363">
    <property type="entry name" value="Ribosomal_bL21"/>
    <property type="match status" value="1"/>
</dbReference>
<dbReference type="InterPro" id="IPR028909">
    <property type="entry name" value="bL21-like"/>
</dbReference>
<dbReference type="InterPro" id="IPR036164">
    <property type="entry name" value="bL21-like_sf"/>
</dbReference>
<dbReference type="InterPro" id="IPR001787">
    <property type="entry name" value="Ribosomal_bL21"/>
</dbReference>
<dbReference type="InterPro" id="IPR018258">
    <property type="entry name" value="Ribosomal_bL21_CS"/>
</dbReference>
<dbReference type="NCBIfam" id="TIGR00061">
    <property type="entry name" value="L21"/>
    <property type="match status" value="1"/>
</dbReference>
<dbReference type="PANTHER" id="PTHR21349">
    <property type="entry name" value="50S RIBOSOMAL PROTEIN L21"/>
    <property type="match status" value="1"/>
</dbReference>
<dbReference type="PANTHER" id="PTHR21349:SF0">
    <property type="entry name" value="LARGE RIBOSOMAL SUBUNIT PROTEIN BL21M"/>
    <property type="match status" value="1"/>
</dbReference>
<dbReference type="Pfam" id="PF00829">
    <property type="entry name" value="Ribosomal_L21p"/>
    <property type="match status" value="1"/>
</dbReference>
<dbReference type="SUPFAM" id="SSF141091">
    <property type="entry name" value="L21p-like"/>
    <property type="match status" value="1"/>
</dbReference>
<dbReference type="PROSITE" id="PS01169">
    <property type="entry name" value="RIBOSOMAL_L21"/>
    <property type="match status" value="1"/>
</dbReference>
<sequence>MFAVIETGGKQYLVKKGSVIKVEKLEAEEGKEVEIDKAVCLSGNGLSYLTDATVKAEVLEQCRGEKIIIFKKKRRKNYRRKTGHRQYITVLRINEINLQK</sequence>
<feature type="chain" id="PRO_0000269426" description="Large ribosomal subunit protein bL21">
    <location>
        <begin position="1"/>
        <end position="100"/>
    </location>
</feature>
<protein>
    <recommendedName>
        <fullName evidence="1">Large ribosomal subunit protein bL21</fullName>
    </recommendedName>
    <alternativeName>
        <fullName evidence="2">50S ribosomal protein L21</fullName>
    </alternativeName>
</protein>
<proteinExistence type="inferred from homology"/>
<reference key="1">
    <citation type="journal article" date="2005" name="PLoS Biol.">
        <title>The Wolbachia genome of Brugia malayi: endosymbiont evolution within a human pathogenic nematode.</title>
        <authorList>
            <person name="Foster J."/>
            <person name="Ganatra M."/>
            <person name="Kamal I."/>
            <person name="Ware J."/>
            <person name="Makarova K."/>
            <person name="Ivanova N."/>
            <person name="Bhattacharyya A."/>
            <person name="Kapatral V."/>
            <person name="Kumar S."/>
            <person name="Posfai J."/>
            <person name="Vincze T."/>
            <person name="Ingram J."/>
            <person name="Moran L."/>
            <person name="Lapidus A."/>
            <person name="Omelchenko M."/>
            <person name="Kyrpides N."/>
            <person name="Ghedin E."/>
            <person name="Wang S."/>
            <person name="Goltsman E."/>
            <person name="Joukov V."/>
            <person name="Ostrovskaya O."/>
            <person name="Tsukerman K."/>
            <person name="Mazur M."/>
            <person name="Comb D."/>
            <person name="Koonin E."/>
            <person name="Slatko B."/>
        </authorList>
    </citation>
    <scope>NUCLEOTIDE SEQUENCE [LARGE SCALE GENOMIC DNA]</scope>
    <source>
        <strain>TRS</strain>
    </source>
</reference>